<evidence type="ECO:0000250" key="1"/>
<evidence type="ECO:0000250" key="2">
    <source>
        <dbReference type="UniProtKB" id="P53041"/>
    </source>
</evidence>
<evidence type="ECO:0000250" key="3">
    <source>
        <dbReference type="UniProtKB" id="Q60676"/>
    </source>
</evidence>
<evidence type="ECO:0000256" key="4">
    <source>
        <dbReference type="SAM" id="MobiDB-lite"/>
    </source>
</evidence>
<evidence type="ECO:0000269" key="5">
    <source>
    </source>
</evidence>
<evidence type="ECO:0000269" key="6">
    <source>
    </source>
</evidence>
<evidence type="ECO:0000269" key="7">
    <source>
    </source>
</evidence>
<evidence type="ECO:0000269" key="8">
    <source>
    </source>
</evidence>
<evidence type="ECO:0000269" key="9">
    <source>
    </source>
</evidence>
<evidence type="ECO:0000269" key="10">
    <source>
    </source>
</evidence>
<evidence type="ECO:0000269" key="11">
    <source>
    </source>
</evidence>
<evidence type="ECO:0000269" key="12">
    <source>
    </source>
</evidence>
<evidence type="ECO:0000305" key="13"/>
<evidence type="ECO:0007744" key="14">
    <source>
        <dbReference type="PDB" id="4JA7"/>
    </source>
</evidence>
<evidence type="ECO:0007744" key="15">
    <source>
        <dbReference type="PDB" id="4JA9"/>
    </source>
</evidence>
<evidence type="ECO:0007829" key="16">
    <source>
        <dbReference type="PDB" id="4JA7"/>
    </source>
</evidence>
<evidence type="ECO:0007829" key="17">
    <source>
        <dbReference type="PDB" id="4JA9"/>
    </source>
</evidence>
<reference key="1">
    <citation type="journal article" date="1994" name="J. Biol. Chem.">
        <title>Molecular cloning of a protein serine/threonine phosphatase containing a putative regulatory tetratricopeptide repeat domain.</title>
        <authorList>
            <person name="Becker W."/>
            <person name="Kentrup H."/>
            <person name="Klumpp S."/>
            <person name="Schultz J.E."/>
            <person name="Joost H.G."/>
        </authorList>
    </citation>
    <scope>NUCLEOTIDE SEQUENCE [MRNA]</scope>
    <source>
        <strain>Sprague-Dawley</strain>
        <tissue>Testis</tissue>
    </source>
</reference>
<reference key="2">
    <citation type="journal article" date="2001" name="Biochemistry">
        <title>Identification of amino acids in the tetratricopeptide repeat and C-terminal domains of protein phosphatase 5 involved in autoinhibition and lipid activation.</title>
        <authorList>
            <person name="Kang H."/>
            <person name="Sayner S.L."/>
            <person name="Gross K.L."/>
            <person name="Russell L.C."/>
            <person name="Chinkers M."/>
        </authorList>
    </citation>
    <scope>FUNCTION AS PHOSPHATASE</scope>
    <scope>CATALYTIC ACTIVITY</scope>
    <scope>ACTIVITY REGULATION</scope>
    <scope>MUTAGENESIS OF GLU-29; LYS-32; GLU-56; ILE-63; ARG-74; GLU-76; CYS-77; TYR-80; LYS-97 AND ARG-101</scope>
</reference>
<reference key="3">
    <citation type="journal article" date="2002" name="Biochemistry">
        <title>Identification of potential physiological activators of protein phosphatase 5.</title>
        <authorList>
            <person name="Ramsey A.J."/>
            <person name="Chinkers M."/>
        </authorList>
    </citation>
    <scope>COFACTOR</scope>
    <scope>ACTIVITY REGULATION</scope>
    <scope>CATALYTIC ACTIVITY</scope>
</reference>
<reference key="4">
    <citation type="journal article" date="2002" name="Curr. Biol.">
        <title>Galpha(12) and Galpha(13) interact with Ser/Thr protein phosphatase type 5 and stimulate its phosphatase activity.</title>
        <authorList>
            <person name="Yamaguchi Y."/>
            <person name="Katoh H."/>
            <person name="Mori K."/>
            <person name="Negishi M."/>
        </authorList>
    </citation>
    <scope>FUNCTION AS PHOSPHATASE</scope>
    <scope>INTERACTION WITH GNA12 AND GNA13</scope>
    <scope>SUBCELLULAR LOCATION</scope>
</reference>
<reference key="5">
    <citation type="journal article" date="2005" name="J. Biol. Chem.">
        <title>Dephosphorylation of tau by protein phosphatase 5: impairment in Alzheimer's disease.</title>
        <authorList>
            <person name="Liu F."/>
            <person name="Iqbal K."/>
            <person name="Grundke-Iqbal I."/>
            <person name="Rossie S."/>
            <person name="Gong C.X."/>
        </authorList>
    </citation>
    <scope>FUNCTION IN DEPHOSPHORYLATING MAPT</scope>
    <scope>BIOPHYSICOCHEMICAL PROPERTIES</scope>
    <scope>TISSUE SPECIFICITY</scope>
</reference>
<reference key="6">
    <citation type="journal article" date="2006" name="Nat. Cell Biol.">
        <title>Regulation of the Raf-MEK-ERK pathway by protein phosphatase 5.</title>
        <authorList>
            <person name="von Kriegsheim A."/>
            <person name="Pitt A."/>
            <person name="Grindlay G.J."/>
            <person name="Kolch W."/>
            <person name="Dhillon A.S."/>
        </authorList>
    </citation>
    <scope>FUNCTION IN MAPK SIGNALING</scope>
</reference>
<reference key="7">
    <citation type="journal article" date="2006" name="Proc. Natl. Acad. Sci. U.S.A.">
        <title>Rac GTPase signaling through the PP5 protein phosphatase.</title>
        <authorList>
            <person name="Gentile S."/>
            <person name="Darden T."/>
            <person name="Erxleben C."/>
            <person name="Romeo C."/>
            <person name="Russo A."/>
            <person name="Martin N."/>
            <person name="Rossie S."/>
            <person name="Armstrong D.L."/>
        </authorList>
    </citation>
    <scope>FUNCTION IN RAC1 SIGNALING</scope>
    <scope>ACTIVITY REGULATION</scope>
    <scope>INTERACTION WITH RAC1</scope>
    <scope>MUTAGENESIS OF LYS-93; LYS-126 AND TYR-451</scope>
</reference>
<reference key="8">
    <citation type="journal article" date="2006" name="Proc. Natl. Acad. Sci. U.S.A.">
        <title>Posttranslational regulation of the mammalian circadian clock by cryptochrome and protein phosphatase 5.</title>
        <authorList>
            <person name="Partch C.L."/>
            <person name="Shields K.F."/>
            <person name="Thompson C.L."/>
            <person name="Selby C.P."/>
            <person name="Sancar A."/>
        </authorList>
    </citation>
    <scope>INTERACTION WITH CRY1 AND CRY2</scope>
</reference>
<reference key="9">
    <citation type="journal article" date="2015" name="Biosci. Rep.">
        <title>Selective activators of protein phosphatase 5 target the autoinhibitory mechanism.</title>
        <authorList>
            <person name="Haslbeck V."/>
            <person name="Drazic A."/>
            <person name="Eckl J.M."/>
            <person name="Alte F."/>
            <person name="Helmuth M."/>
            <person name="Popowicz G."/>
            <person name="Schmidt W."/>
            <person name="Braun F."/>
            <person name="Weiwad M."/>
            <person name="Fischer G."/>
            <person name="Gemmecker G."/>
            <person name="Sattler M."/>
            <person name="Striggow F."/>
            <person name="Groll M."/>
            <person name="Richter K."/>
        </authorList>
    </citation>
    <scope>X-RAY CRYSTALLOGRAPHY (2.00 ANGSTROMS) OF 16-499 IN COMPLEX WITH MAGNESIUM</scope>
    <scope>COFACTOR</scope>
    <scope>INTERACTION WITH HSP90AA1</scope>
</reference>
<comment type="function">
    <text evidence="2 3 5 7 8 9 11">Serine/threonine-protein phosphatase that dephosphorylates a myriad of proteins involved in different signaling pathways including the kinases CSNK1E, ASK1/MAP3K5, PRKDC and RAF1, the nuclear receptors NR3C1, PPARG, ESR1 and ESR2, SMAD proteins and TAU/MAPT (PubMed:11523989, PubMed:12176367, PubMed:15546861, PubMed:16549782, PubMed:16892053). Implicated in wide ranging cellular processes, including apoptosis, differentiation, DNA damage response, cell survival, regulation of ion channels or circadian rhythms, in response to steroid and thyroid hormones, calcium, fatty acids, TGF-beta as well as oxidative and genotoxic stresses (By similarity). Participates in the control of DNA damage response mechanisms such as checkpoint activation and DNA damage repair through, for instance, the regulation ATM/ATR-signaling and dephosphorylation of PRKDC and TP53BP1 (By similarity). Inhibits ASK1/MAP3K5-mediated apoptosis induced by oxidative stress (By similarity). Plays a positive role in adipogenesis, mainly through the dephosphorylation and activation of PPARG transactivation function. Also dephosphorylates and inhibits the anti-adipogenic effect of NR3C1 (By similarity). Regulates the circadian rhythms, through the dephosphorylation and activation of CSNK1E (By similarity). May modulate TGF-beta signaling pathway by the regulation of SMAD3 phosphorylation and protein expression levels (By similarity). Dephosphorylates and may play a role in the regulation of TAU/MAPT (PubMed:15546861). Through their dephosphorylation, may play a role in the regulation of ions channels such as KCNH2 (PubMed:16549782). Dephosphorylate FNIP1, disrupting interaction with HSP90AA1/Hsp90 (By similarity).</text>
</comment>
<comment type="catalytic activity">
    <reaction evidence="5 6">
        <text>O-phospho-L-seryl-[protein] + H2O = L-seryl-[protein] + phosphate</text>
        <dbReference type="Rhea" id="RHEA:20629"/>
        <dbReference type="Rhea" id="RHEA-COMP:9863"/>
        <dbReference type="Rhea" id="RHEA-COMP:11604"/>
        <dbReference type="ChEBI" id="CHEBI:15377"/>
        <dbReference type="ChEBI" id="CHEBI:29999"/>
        <dbReference type="ChEBI" id="CHEBI:43474"/>
        <dbReference type="ChEBI" id="CHEBI:83421"/>
        <dbReference type="EC" id="3.1.3.16"/>
    </reaction>
    <physiologicalReaction direction="left-to-right" evidence="5 6">
        <dbReference type="Rhea" id="RHEA:20630"/>
    </physiologicalReaction>
</comment>
<comment type="catalytic activity">
    <reaction evidence="5 6">
        <text>O-phospho-L-threonyl-[protein] + H2O = L-threonyl-[protein] + phosphate</text>
        <dbReference type="Rhea" id="RHEA:47004"/>
        <dbReference type="Rhea" id="RHEA-COMP:11060"/>
        <dbReference type="Rhea" id="RHEA-COMP:11605"/>
        <dbReference type="ChEBI" id="CHEBI:15377"/>
        <dbReference type="ChEBI" id="CHEBI:30013"/>
        <dbReference type="ChEBI" id="CHEBI:43474"/>
        <dbReference type="ChEBI" id="CHEBI:61977"/>
        <dbReference type="EC" id="3.1.3.16"/>
    </reaction>
    <physiologicalReaction direction="left-to-right" evidence="5 6">
        <dbReference type="Rhea" id="RHEA:47005"/>
    </physiologicalReaction>
</comment>
<comment type="cofactor">
    <cofactor evidence="6 12">
        <name>Mg(2+)</name>
        <dbReference type="ChEBI" id="CHEBI:18420"/>
    </cofactor>
    <cofactor evidence="6 12">
        <name>Mn(2+)</name>
        <dbReference type="ChEBI" id="CHEBI:29035"/>
    </cofactor>
    <text evidence="6 12">Binds 2 magnesium or manganese ions per subunit.</text>
</comment>
<comment type="activity regulation">
    <text evidence="5 6 9">Autoinhibited. In the autoinhibited state, the TPR domain interacts with the catalytic region and prevents substrate access to the catalytic pocket. Allosterically activated by various polyunsaturated fatty acids, free long-chain fatty-acids and long-chain fatty acyl-CoA esters, arachidonic acid being the most effective activator. HSP90A and probably RAC1, GNA12 and GNA13 can also release the autoinhibition by the TPR repeat. Activation by RAC1, GNA12 and GNA13 is synergistic with the one produced by fatty acids binding. Inhibited by okadaic acid.</text>
</comment>
<comment type="biophysicochemical properties">
    <kinetics>
        <KM evidence="8">12.1 uM for MAPT/TAU (at pH 7.4 and 30 degrees Celsius)</KM>
    </kinetics>
</comment>
<comment type="subunit">
    <text evidence="2 3 7 9 10 12">Probably forms a complex composed of chaperones HSP90 and HSP70, co-chaperones STIP1/HOP, CDC37, PPP5C, PTGES3/p23, TSC1 and client protein TSC2 (By similarity). Probably forms a complex composed of chaperones HSP90 and HSP70, co-chaperones CDC37, PPP5C, TSC1 and client protein TSC2, CDK4, AKT, RAF1 and NR3C1; this complex does not contain co-chaperones STIP1/HOP and PTGES3/p23 (By similarity). Part of a complex with HSP90/HSP90AA1 and steroid receptors (By similarity). Interacts (via TPR repeats) with HSP90AA1 (via TPR repeat-binding motif) or HSPA1A/HSPA1B; the interaction is direct and activates the phosphatase activity (PubMed:26182372). Dissociates from HSPA1A/HSPA1B and HSP90AA1 in response to arachidonic acid (By similarity). Interacts with CPNE1 (via VWFA domain) (By similarity). Interacts with CDC16, CDC27 (By similarity). Interacts with KLHDC10 (via the 6 Kelch repeats); inhibits the phosphatase activity on MAP3K5 (By similarity). Interacts with ATM and ATR; both interactions are induced by DNA damage and enhance ATM and ATR kinase activity (By similarity). Interacts with RAD17; reduced by DNA damage (By similarity). Interacts with nuclear receptors such as NR3C1/GCR and PPARG (activated by agonist); regulates their transactivation activities (By similarity). Interacts (via TPR repeats) with S100 proteins S100A1, S100A2, S100A6, S100B and S100P; the interactions are calcium-dependent, strongly activate PPP5C phosphatase activity and compete with HSP90AA1 and MAP3K5 interactions (By similarity). Interacts with SMAD2 and SMAD3 but not with SMAD1; decreases SMAD3 phosphorylation and protein levels (By similarity). Interacts (via TPR repeats) with CRY1 and CRY2; the interaction with CRY2 down-regulates the phosphatase activity on CSNK1E (PubMed:16790549). Interacts (via TPR repeats) with the active form of RAC1, GNA12 or GNA13; these interactions activate the phosphatase activity and translocate PPP5C to the cell membrane (PubMed:12176367, PubMed:16549782). Interacts with FLCN (By similarity).</text>
</comment>
<comment type="subcellular location">
    <subcellularLocation>
        <location evidence="7">Nucleus</location>
    </subcellularLocation>
    <subcellularLocation>
        <location evidence="7">Cytoplasm</location>
    </subcellularLocation>
    <subcellularLocation>
        <location evidence="2">Cell membrane</location>
    </subcellularLocation>
    <text evidence="2">Predominantly nuclear. But also present in the cytoplasm. Translocates from the cytoplasm to the plasma membrane in a RAC1-dependent manner.</text>
</comment>
<comment type="tissue specificity">
    <text evidence="8">Predominantly found in brain and, in lower levels, in testis, but was nearly undetectable in spleen, lung, skeletal muscle, kidney and liver.</text>
</comment>
<comment type="PTM">
    <text evidence="1">Activated by at least two different proteolytic cleavages producing a 56 kDa and a 50 kDa form.</text>
</comment>
<comment type="similarity">
    <text evidence="13">Belongs to the PPP phosphatase family. PP-5 (PP-T) subfamily.</text>
</comment>
<proteinExistence type="evidence at protein level"/>
<organism>
    <name type="scientific">Rattus norvegicus</name>
    <name type="common">Rat</name>
    <dbReference type="NCBI Taxonomy" id="10116"/>
    <lineage>
        <taxon>Eukaryota</taxon>
        <taxon>Metazoa</taxon>
        <taxon>Chordata</taxon>
        <taxon>Craniata</taxon>
        <taxon>Vertebrata</taxon>
        <taxon>Euteleostomi</taxon>
        <taxon>Mammalia</taxon>
        <taxon>Eutheria</taxon>
        <taxon>Euarchontoglires</taxon>
        <taxon>Glires</taxon>
        <taxon>Rodentia</taxon>
        <taxon>Myomorpha</taxon>
        <taxon>Muroidea</taxon>
        <taxon>Muridae</taxon>
        <taxon>Murinae</taxon>
        <taxon>Rattus</taxon>
    </lineage>
</organism>
<protein>
    <recommendedName>
        <fullName>Serine/threonine-protein phosphatase 5</fullName>
        <shortName>PP5</shortName>
        <ecNumber evidence="5 6">3.1.3.16</ecNumber>
    </recommendedName>
    <alternativeName>
        <fullName>Protein phosphatase T</fullName>
        <shortName>PPT</shortName>
    </alternativeName>
</protein>
<sequence>MAMAEGERTECAEPPRDEPPAEGTLKRAEELKTQANDYFKAKDYENAIKFYSQAIELNPSNAIYYGNRSLAYLRTECYGYALGDATRAIELDKKYIKGYYRRAASNMALGKFRAALRDYETVVKVKPNDKDAKMKYQECSKIVKQKAFERAIAGDEHRRSVVDSLDIESMTIEDEYSGPKLEDGKVTITFMKDLMQWYKDQKKLHRKCAYQILVQVKEVLCKLSTLVETTLKETEKITVCGDTHGQFYDLLNIFELNGLPSETNPYIFNGDFVDRGSFSVEVILTLFGFKLLYPDHFHLLRGNHETDNMNQIYGFEGEVKAKYTAQMYELFSEVFEWLPLAQCINGKVLIMHGGLFSEDGVTLDDIRKIERNRQPPDSGPMCDLLWSDPQPQNGRSVSKRGVSCQFGPDVTKAFLEENQLDYIIRSHEVKAEGYEVAHGGRCVTVFSAPNYCDQMGNKASYIHLQGSDLRPQFHQFTAVPHPNVKPMAYANTLLQLGMM</sequence>
<keyword id="KW-0002">3D-structure</keyword>
<keyword id="KW-0007">Acetylation</keyword>
<keyword id="KW-1003">Cell membrane</keyword>
<keyword id="KW-0963">Cytoplasm</keyword>
<keyword id="KW-0378">Hydrolase</keyword>
<keyword id="KW-0460">Magnesium</keyword>
<keyword id="KW-0464">Manganese</keyword>
<keyword id="KW-0472">Membrane</keyword>
<keyword id="KW-0479">Metal-binding</keyword>
<keyword id="KW-0539">Nucleus</keyword>
<keyword id="KW-0904">Protein phosphatase</keyword>
<keyword id="KW-1185">Reference proteome</keyword>
<keyword id="KW-0677">Repeat</keyword>
<keyword id="KW-0802">TPR repeat</keyword>
<dbReference type="EC" id="3.1.3.16" evidence="5 6"/>
<dbReference type="EMBL" id="X77237">
    <property type="protein sequence ID" value="CAA54454.1"/>
    <property type="molecule type" value="mRNA"/>
</dbReference>
<dbReference type="PIR" id="A55346">
    <property type="entry name" value="A55346"/>
</dbReference>
<dbReference type="RefSeq" id="NP_113917.1">
    <property type="nucleotide sequence ID" value="NM_031729.1"/>
</dbReference>
<dbReference type="PDB" id="4JA7">
    <property type="method" value="X-ray"/>
    <property type="resolution" value="2.00 A"/>
    <property type="chains" value="A=16-499"/>
</dbReference>
<dbReference type="PDB" id="4JA9">
    <property type="method" value="X-ray"/>
    <property type="resolution" value="2.30 A"/>
    <property type="chains" value="A=16-499"/>
</dbReference>
<dbReference type="PDBsum" id="4JA7"/>
<dbReference type="PDBsum" id="4JA9"/>
<dbReference type="SMR" id="P53042"/>
<dbReference type="BioGRID" id="249291">
    <property type="interactions" value="3"/>
</dbReference>
<dbReference type="DIP" id="DIP-61212N"/>
<dbReference type="FunCoup" id="P53042">
    <property type="interactions" value="4157"/>
</dbReference>
<dbReference type="IntAct" id="P53042">
    <property type="interactions" value="2"/>
</dbReference>
<dbReference type="STRING" id="10116.ENSRNOP00000023078"/>
<dbReference type="BindingDB" id="P53042"/>
<dbReference type="ChEMBL" id="CHEMBL5465272"/>
<dbReference type="iPTMnet" id="P53042"/>
<dbReference type="PhosphoSitePlus" id="P53042"/>
<dbReference type="SwissPalm" id="P53042"/>
<dbReference type="jPOST" id="P53042"/>
<dbReference type="PaxDb" id="10116-ENSRNOP00000023078"/>
<dbReference type="Ensembl" id="ENSRNOT00000023078.6">
    <property type="protein sequence ID" value="ENSRNOP00000023078.3"/>
    <property type="gene ID" value="ENSRNOG00000016907.6"/>
</dbReference>
<dbReference type="GeneID" id="65179"/>
<dbReference type="KEGG" id="rno:65179"/>
<dbReference type="UCSC" id="RGD:68415">
    <property type="organism name" value="rat"/>
</dbReference>
<dbReference type="AGR" id="RGD:68415"/>
<dbReference type="CTD" id="5536"/>
<dbReference type="RGD" id="68415">
    <property type="gene designation" value="Ppp5c"/>
</dbReference>
<dbReference type="eggNOG" id="KOG0376">
    <property type="taxonomic scope" value="Eukaryota"/>
</dbReference>
<dbReference type="GeneTree" id="ENSGT00940000158785"/>
<dbReference type="HOGENOM" id="CLU_004962_5_2_1"/>
<dbReference type="InParanoid" id="P53042"/>
<dbReference type="OrthoDB" id="445564at2759"/>
<dbReference type="PhylomeDB" id="P53042"/>
<dbReference type="TreeFam" id="TF105562"/>
<dbReference type="BRENDA" id="3.1.3.16">
    <property type="organism ID" value="5301"/>
</dbReference>
<dbReference type="Reactome" id="R-RNO-5675221">
    <property type="pathway name" value="Negative regulation of MAPK pathway"/>
</dbReference>
<dbReference type="Reactome" id="R-RNO-5693565">
    <property type="pathway name" value="Recruitment and ATM-mediated phosphorylation of repair and signaling proteins at DNA double strand breaks"/>
</dbReference>
<dbReference type="Reactome" id="R-RNO-8939211">
    <property type="pathway name" value="ESR-mediated signaling"/>
</dbReference>
<dbReference type="SABIO-RK" id="P53042"/>
<dbReference type="EvolutionaryTrace" id="P53042"/>
<dbReference type="PRO" id="PR:P53042"/>
<dbReference type="Proteomes" id="UP000002494">
    <property type="component" value="Chromosome 1"/>
</dbReference>
<dbReference type="Bgee" id="ENSRNOG00000016907">
    <property type="expression patterns" value="Expressed in cerebellum and 20 other cell types or tissues"/>
</dbReference>
<dbReference type="GO" id="GO:0005829">
    <property type="term" value="C:cytosol"/>
    <property type="evidence" value="ECO:0000266"/>
    <property type="project" value="RGD"/>
</dbReference>
<dbReference type="GO" id="GO:0043025">
    <property type="term" value="C:neuronal cell body"/>
    <property type="evidence" value="ECO:0000314"/>
    <property type="project" value="RGD"/>
</dbReference>
<dbReference type="GO" id="GO:0005634">
    <property type="term" value="C:nucleus"/>
    <property type="evidence" value="ECO:0000318"/>
    <property type="project" value="GO_Central"/>
</dbReference>
<dbReference type="GO" id="GO:0043204">
    <property type="term" value="C:perikaryon"/>
    <property type="evidence" value="ECO:0000314"/>
    <property type="project" value="RGD"/>
</dbReference>
<dbReference type="GO" id="GO:0005886">
    <property type="term" value="C:plasma membrane"/>
    <property type="evidence" value="ECO:0007669"/>
    <property type="project" value="UniProtKB-SubCell"/>
</dbReference>
<dbReference type="GO" id="GO:0101031">
    <property type="term" value="C:protein folding chaperone complex"/>
    <property type="evidence" value="ECO:0000266"/>
    <property type="project" value="RGD"/>
</dbReference>
<dbReference type="GO" id="GO:0032991">
    <property type="term" value="C:protein-containing complex"/>
    <property type="evidence" value="ECO:0000266"/>
    <property type="project" value="RGD"/>
</dbReference>
<dbReference type="GO" id="GO:1990635">
    <property type="term" value="C:proximal dendrite"/>
    <property type="evidence" value="ECO:0000314"/>
    <property type="project" value="RGD"/>
</dbReference>
<dbReference type="GO" id="GO:0043531">
    <property type="term" value="F:ADP binding"/>
    <property type="evidence" value="ECO:0000266"/>
    <property type="project" value="RGD"/>
</dbReference>
<dbReference type="GO" id="GO:0005524">
    <property type="term" value="F:ATP binding"/>
    <property type="evidence" value="ECO:0000266"/>
    <property type="project" value="RGD"/>
</dbReference>
<dbReference type="GO" id="GO:0001965">
    <property type="term" value="F:G-protein alpha-subunit binding"/>
    <property type="evidence" value="ECO:0000314"/>
    <property type="project" value="RGD"/>
</dbReference>
<dbReference type="GO" id="GO:0031072">
    <property type="term" value="F:heat shock protein binding"/>
    <property type="evidence" value="ECO:0000353"/>
    <property type="project" value="RGD"/>
</dbReference>
<dbReference type="GO" id="GO:0030544">
    <property type="term" value="F:Hsp70 protein binding"/>
    <property type="evidence" value="ECO:0000314"/>
    <property type="project" value="BHF-UCL"/>
</dbReference>
<dbReference type="GO" id="GO:0051879">
    <property type="term" value="F:Hsp90 protein binding"/>
    <property type="evidence" value="ECO:0000314"/>
    <property type="project" value="BHF-UCL"/>
</dbReference>
<dbReference type="GO" id="GO:0042802">
    <property type="term" value="F:identical protein binding"/>
    <property type="evidence" value="ECO:0000266"/>
    <property type="project" value="RGD"/>
</dbReference>
<dbReference type="GO" id="GO:0046872">
    <property type="term" value="F:metal ion binding"/>
    <property type="evidence" value="ECO:0007669"/>
    <property type="project" value="UniProtKB-KW"/>
</dbReference>
<dbReference type="GO" id="GO:0008017">
    <property type="term" value="F:microtubule binding"/>
    <property type="evidence" value="ECO:0000314"/>
    <property type="project" value="RGD"/>
</dbReference>
<dbReference type="GO" id="GO:0031435">
    <property type="term" value="F:mitogen-activated protein kinase kinase kinase binding"/>
    <property type="evidence" value="ECO:0000353"/>
    <property type="project" value="BHF-UCL"/>
</dbReference>
<dbReference type="GO" id="GO:0016791">
    <property type="term" value="F:phosphatase activity"/>
    <property type="evidence" value="ECO:0000266"/>
    <property type="project" value="RGD"/>
</dbReference>
<dbReference type="GO" id="GO:0004721">
    <property type="term" value="F:phosphoprotein phosphatase activity"/>
    <property type="evidence" value="ECO:0000314"/>
    <property type="project" value="UniProtKB"/>
</dbReference>
<dbReference type="GO" id="GO:0030291">
    <property type="term" value="F:protein serine/threonine kinase inhibitor activity"/>
    <property type="evidence" value="ECO:0000314"/>
    <property type="project" value="BHF-UCL"/>
</dbReference>
<dbReference type="GO" id="GO:0004722">
    <property type="term" value="F:protein serine/threonine phosphatase activity"/>
    <property type="evidence" value="ECO:0000314"/>
    <property type="project" value="ARUK-UCL"/>
</dbReference>
<dbReference type="GO" id="GO:0044877">
    <property type="term" value="F:protein-containing complex binding"/>
    <property type="evidence" value="ECO:0000314"/>
    <property type="project" value="RGD"/>
</dbReference>
<dbReference type="GO" id="GO:0003723">
    <property type="term" value="F:RNA binding"/>
    <property type="evidence" value="ECO:0000266"/>
    <property type="project" value="RGD"/>
</dbReference>
<dbReference type="GO" id="GO:0071276">
    <property type="term" value="P:cellular response to cadmium ion"/>
    <property type="evidence" value="ECO:0000270"/>
    <property type="project" value="RGD"/>
</dbReference>
<dbReference type="GO" id="GO:0070301">
    <property type="term" value="P:cellular response to hydrogen peroxide"/>
    <property type="evidence" value="ECO:0000314"/>
    <property type="project" value="BHF-UCL"/>
</dbReference>
<dbReference type="GO" id="GO:0043066">
    <property type="term" value="P:negative regulation of apoptotic process"/>
    <property type="evidence" value="ECO:0000315"/>
    <property type="project" value="RGD"/>
</dbReference>
<dbReference type="GO" id="GO:0043409">
    <property type="term" value="P:negative regulation of MAPK cascade"/>
    <property type="evidence" value="ECO:0000314"/>
    <property type="project" value="BHF-UCL"/>
</dbReference>
<dbReference type="GO" id="GO:0070262">
    <property type="term" value="P:peptidyl-serine dephosphorylation"/>
    <property type="evidence" value="ECO:0000250"/>
    <property type="project" value="UniProtKB"/>
</dbReference>
<dbReference type="GO" id="GO:2000324">
    <property type="term" value="P:positive regulation of nuclear receptor-mediated glucocorticoid signaling pathway"/>
    <property type="evidence" value="ECO:0000315"/>
    <property type="project" value="RGD"/>
</dbReference>
<dbReference type="GO" id="GO:1904550">
    <property type="term" value="P:response to arachidonate"/>
    <property type="evidence" value="ECO:0000314"/>
    <property type="project" value="ARUK-UCL"/>
</dbReference>
<dbReference type="GO" id="GO:0010288">
    <property type="term" value="P:response to lead ion"/>
    <property type="evidence" value="ECO:0000314"/>
    <property type="project" value="ARUK-UCL"/>
</dbReference>
<dbReference type="GO" id="GO:0043278">
    <property type="term" value="P:response to morphine"/>
    <property type="evidence" value="ECO:0000266"/>
    <property type="project" value="RGD"/>
</dbReference>
<dbReference type="CDD" id="cd07417">
    <property type="entry name" value="MPP_PP5_C"/>
    <property type="match status" value="1"/>
</dbReference>
<dbReference type="FunFam" id="1.25.40.10:FF:000055">
    <property type="entry name" value="Serine/threonine-protein phosphatase"/>
    <property type="match status" value="1"/>
</dbReference>
<dbReference type="FunFam" id="3.60.21.10:FF:000017">
    <property type="entry name" value="Serine/threonine-protein phosphatase"/>
    <property type="match status" value="1"/>
</dbReference>
<dbReference type="Gene3D" id="3.60.21.10">
    <property type="match status" value="1"/>
</dbReference>
<dbReference type="Gene3D" id="1.25.40.10">
    <property type="entry name" value="Tetratricopeptide repeat domain"/>
    <property type="match status" value="1"/>
</dbReference>
<dbReference type="InterPro" id="IPR004843">
    <property type="entry name" value="Calcineurin-like_PHP_ApaH"/>
</dbReference>
<dbReference type="InterPro" id="IPR029052">
    <property type="entry name" value="Metallo-depent_PP-like"/>
</dbReference>
<dbReference type="InterPro" id="IPR041753">
    <property type="entry name" value="PP5_C"/>
</dbReference>
<dbReference type="InterPro" id="IPR013235">
    <property type="entry name" value="PPP_dom"/>
</dbReference>
<dbReference type="InterPro" id="IPR051134">
    <property type="entry name" value="PPP_phosphatase"/>
</dbReference>
<dbReference type="InterPro" id="IPR006186">
    <property type="entry name" value="Ser/Thr-sp_prot-phosphatase"/>
</dbReference>
<dbReference type="InterPro" id="IPR011990">
    <property type="entry name" value="TPR-like_helical_dom_sf"/>
</dbReference>
<dbReference type="InterPro" id="IPR019734">
    <property type="entry name" value="TPR_rpt"/>
</dbReference>
<dbReference type="PANTHER" id="PTHR45668">
    <property type="entry name" value="SERINE/THREONINE-PROTEIN PHOSPHATASE 5-RELATED"/>
    <property type="match status" value="1"/>
</dbReference>
<dbReference type="PANTHER" id="PTHR45668:SF5">
    <property type="entry name" value="SERINE_THREONINE-PROTEIN PHOSPHATASE 5"/>
    <property type="match status" value="1"/>
</dbReference>
<dbReference type="Pfam" id="PF00149">
    <property type="entry name" value="Metallophos"/>
    <property type="match status" value="1"/>
</dbReference>
<dbReference type="Pfam" id="PF08321">
    <property type="entry name" value="PPP5"/>
    <property type="match status" value="1"/>
</dbReference>
<dbReference type="Pfam" id="PF00515">
    <property type="entry name" value="TPR_1"/>
    <property type="match status" value="1"/>
</dbReference>
<dbReference type="PIRSF" id="PIRSF033096">
    <property type="entry name" value="PPPtase_5"/>
    <property type="match status" value="1"/>
</dbReference>
<dbReference type="PRINTS" id="PR00114">
    <property type="entry name" value="STPHPHTASE"/>
</dbReference>
<dbReference type="SMART" id="SM00156">
    <property type="entry name" value="PP2Ac"/>
    <property type="match status" value="1"/>
</dbReference>
<dbReference type="SMART" id="SM00028">
    <property type="entry name" value="TPR"/>
    <property type="match status" value="3"/>
</dbReference>
<dbReference type="SUPFAM" id="SSF56300">
    <property type="entry name" value="Metallo-dependent phosphatases"/>
    <property type="match status" value="1"/>
</dbReference>
<dbReference type="SUPFAM" id="SSF48452">
    <property type="entry name" value="TPR-like"/>
    <property type="match status" value="1"/>
</dbReference>
<dbReference type="PROSITE" id="PS00125">
    <property type="entry name" value="SER_THR_PHOSPHATASE"/>
    <property type="match status" value="1"/>
</dbReference>
<dbReference type="PROSITE" id="PS50005">
    <property type="entry name" value="TPR"/>
    <property type="match status" value="3"/>
</dbReference>
<dbReference type="PROSITE" id="PS50293">
    <property type="entry name" value="TPR_REGION"/>
    <property type="match status" value="1"/>
</dbReference>
<name>PPP5_RAT</name>
<gene>
    <name type="primary">Ppp5c</name>
</gene>
<feature type="initiator methionine" description="Removed" evidence="2">
    <location>
        <position position="1"/>
    </location>
</feature>
<feature type="chain" id="PRO_0000058897" description="Serine/threonine-protein phosphatase 5">
    <location>
        <begin position="2"/>
        <end position="499"/>
    </location>
</feature>
<feature type="repeat" description="TPR 1">
    <location>
        <begin position="28"/>
        <end position="61"/>
    </location>
</feature>
<feature type="repeat" description="TPR 2">
    <location>
        <begin position="62"/>
        <end position="95"/>
    </location>
</feature>
<feature type="repeat" description="TPR 3">
    <location>
        <begin position="96"/>
        <end position="129"/>
    </location>
</feature>
<feature type="region of interest" description="Disordered" evidence="4">
    <location>
        <begin position="1"/>
        <end position="23"/>
    </location>
</feature>
<feature type="region of interest" description="Catalytic">
    <location>
        <begin position="200"/>
        <end position="499"/>
    </location>
</feature>
<feature type="region of interest" description="Required for autoinhibition" evidence="5">
    <location>
        <begin position="495"/>
        <end position="499"/>
    </location>
</feature>
<feature type="active site" description="Proton donor/acceptor" evidence="2">
    <location>
        <position position="304"/>
    </location>
</feature>
<feature type="binding site" evidence="12 14">
    <location>
        <position position="242"/>
    </location>
    <ligand>
        <name>Mg(2+)</name>
        <dbReference type="ChEBI" id="CHEBI:18420"/>
        <label>1</label>
    </ligand>
</feature>
<feature type="binding site" evidence="12 14">
    <location>
        <position position="244"/>
    </location>
    <ligand>
        <name>Mg(2+)</name>
        <dbReference type="ChEBI" id="CHEBI:18420"/>
        <label>1</label>
    </ligand>
</feature>
<feature type="binding site" evidence="2">
    <location>
        <position position="244"/>
    </location>
    <ligand>
        <name>substrate</name>
    </ligand>
</feature>
<feature type="binding site" evidence="12 14">
    <location>
        <position position="271"/>
    </location>
    <ligand>
        <name>Mg(2+)</name>
        <dbReference type="ChEBI" id="CHEBI:18420"/>
        <label>1</label>
    </ligand>
</feature>
<feature type="binding site" evidence="12 14 15">
    <location>
        <position position="271"/>
    </location>
    <ligand>
        <name>Mg(2+)</name>
        <dbReference type="ChEBI" id="CHEBI:18420"/>
        <label>2</label>
    </ligand>
</feature>
<feature type="binding site" evidence="2">
    <location>
        <position position="275"/>
    </location>
    <ligand>
        <name>substrate</name>
    </ligand>
</feature>
<feature type="binding site" evidence="2">
    <location>
        <begin position="303"/>
        <end position="304"/>
    </location>
    <ligand>
        <name>substrate</name>
    </ligand>
</feature>
<feature type="binding site" evidence="12 14 15">
    <location>
        <position position="303"/>
    </location>
    <ligand>
        <name>Mg(2+)</name>
        <dbReference type="ChEBI" id="CHEBI:18420"/>
        <label>2</label>
    </ligand>
</feature>
<feature type="binding site" evidence="12 14 15">
    <location>
        <position position="352"/>
    </location>
    <ligand>
        <name>Mg(2+)</name>
        <dbReference type="ChEBI" id="CHEBI:18420"/>
        <label>2</label>
    </ligand>
</feature>
<feature type="binding site" evidence="2">
    <location>
        <position position="400"/>
    </location>
    <ligand>
        <name>substrate</name>
    </ligand>
</feature>
<feature type="binding site" evidence="12 14 15">
    <location>
        <position position="427"/>
    </location>
    <ligand>
        <name>Mg(2+)</name>
        <dbReference type="ChEBI" id="CHEBI:18420"/>
        <label>2</label>
    </ligand>
</feature>
<feature type="binding site" evidence="2">
    <location>
        <position position="427"/>
    </location>
    <ligand>
        <name>substrate</name>
    </ligand>
</feature>
<feature type="modified residue" description="N-acetylalanine" evidence="2">
    <location>
        <position position="2"/>
    </location>
</feature>
<feature type="mutagenesis site" description="No effect on phosphatase activity." evidence="5">
    <original>E</original>
    <variation>A</variation>
    <location>
        <position position="29"/>
    </location>
</feature>
<feature type="mutagenesis site" description="No effect on phosphatase activity." evidence="5">
    <original>K</original>
    <variation>A</variation>
    <location>
        <position position="32"/>
    </location>
</feature>
<feature type="mutagenesis site" description="Slightly reduces activation by arachidonic acid.">
    <original>K</original>
    <variation>A</variation>
    <location>
        <position position="40"/>
    </location>
</feature>
<feature type="mutagenesis site" description="No effect on phosphatase activity." evidence="5">
    <original>E</original>
    <variation>A</variation>
    <location>
        <position position="56"/>
    </location>
</feature>
<feature type="mutagenesis site" description="No effect on phosphatase activity." evidence="5">
    <original>I</original>
    <variation>A</variation>
    <location>
        <position position="63"/>
    </location>
</feature>
<feature type="mutagenesis site" description="No effect on phosphatase activity." evidence="5">
    <original>R</original>
    <variation>A</variation>
    <location>
        <position position="74"/>
    </location>
</feature>
<feature type="mutagenesis site" description="Increases basal phosphatase activity." evidence="5">
    <original>E</original>
    <variation>A</variation>
    <location>
        <position position="76"/>
    </location>
</feature>
<feature type="mutagenesis site" description="No effect on phosphatase activity." evidence="5">
    <original>C</original>
    <variation>A</variation>
    <location>
        <position position="77"/>
    </location>
</feature>
<feature type="mutagenesis site" description="No effect on phosphatase activity." evidence="5">
    <original>Y</original>
    <variation>A</variation>
    <location>
        <position position="80"/>
    </location>
</feature>
<feature type="mutagenesis site" description="Loss of inhibition of KCNH2 channel stimulation." evidence="9">
    <original>K</original>
    <variation>E</variation>
    <location>
        <position position="93"/>
    </location>
</feature>
<feature type="mutagenesis site" description="No effect on phosphatase activity." evidence="5">
    <original>K</original>
    <variation>A</variation>
    <location>
        <position position="97"/>
    </location>
</feature>
<feature type="mutagenesis site" description="No effect on phosphatase activity." evidence="5">
    <original>R</original>
    <variation>A</variation>
    <location>
        <position position="101"/>
    </location>
</feature>
<feature type="mutagenesis site" description="Loss of inhibition of KCNH2 channel stimulation." evidence="9">
    <original>K</original>
    <variation>A</variation>
    <location>
        <position position="126"/>
    </location>
</feature>
<feature type="mutagenesis site" description="Insensitive to okadaic acid." evidence="9">
    <original>Y</original>
    <variation>A</variation>
    <location>
        <position position="451"/>
    </location>
</feature>
<feature type="helix" evidence="16">
    <location>
        <begin position="24"/>
        <end position="40"/>
    </location>
</feature>
<feature type="helix" evidence="16">
    <location>
        <begin position="44"/>
        <end position="57"/>
    </location>
</feature>
<feature type="helix" evidence="16">
    <location>
        <begin position="62"/>
        <end position="74"/>
    </location>
</feature>
<feature type="helix" evidence="16">
    <location>
        <begin position="78"/>
        <end position="91"/>
    </location>
</feature>
<feature type="helix" evidence="16">
    <location>
        <begin position="96"/>
        <end position="108"/>
    </location>
</feature>
<feature type="helix" evidence="16">
    <location>
        <begin position="112"/>
        <end position="125"/>
    </location>
</feature>
<feature type="helix" evidence="16">
    <location>
        <begin position="130"/>
        <end position="148"/>
    </location>
</feature>
<feature type="helix" evidence="16">
    <location>
        <begin position="161"/>
        <end position="164"/>
    </location>
</feature>
<feature type="helix" evidence="16">
    <location>
        <begin position="167"/>
        <end position="169"/>
    </location>
</feature>
<feature type="helix" evidence="16">
    <location>
        <begin position="188"/>
        <end position="199"/>
    </location>
</feature>
<feature type="helix" evidence="16">
    <location>
        <begin position="206"/>
        <end position="221"/>
    </location>
</feature>
<feature type="strand" evidence="16">
    <location>
        <begin position="225"/>
        <end position="229"/>
    </location>
</feature>
<feature type="strand" evidence="16">
    <location>
        <begin position="236"/>
        <end position="240"/>
    </location>
</feature>
<feature type="helix" evidence="16">
    <location>
        <begin position="247"/>
        <end position="257"/>
    </location>
</feature>
<feature type="strand" evidence="17">
    <location>
        <begin position="262"/>
        <end position="264"/>
    </location>
</feature>
<feature type="strand" evidence="16">
    <location>
        <begin position="266"/>
        <end position="270"/>
    </location>
</feature>
<feature type="strand" evidence="16">
    <location>
        <begin position="273"/>
        <end position="276"/>
    </location>
</feature>
<feature type="helix" evidence="16">
    <location>
        <begin position="279"/>
        <end position="292"/>
    </location>
</feature>
<feature type="turn" evidence="16">
    <location>
        <begin position="294"/>
        <end position="296"/>
    </location>
</feature>
<feature type="strand" evidence="16">
    <location>
        <begin position="297"/>
        <end position="300"/>
    </location>
</feature>
<feature type="helix" evidence="16">
    <location>
        <begin position="307"/>
        <end position="313"/>
    </location>
</feature>
<feature type="helix" evidence="16">
    <location>
        <begin position="315"/>
        <end position="322"/>
    </location>
</feature>
<feature type="helix" evidence="16">
    <location>
        <begin position="325"/>
        <end position="335"/>
    </location>
</feature>
<feature type="strand" evidence="16">
    <location>
        <begin position="340"/>
        <end position="344"/>
    </location>
</feature>
<feature type="turn" evidence="16">
    <location>
        <begin position="345"/>
        <end position="347"/>
    </location>
</feature>
<feature type="strand" evidence="16">
    <location>
        <begin position="348"/>
        <end position="353"/>
    </location>
</feature>
<feature type="strand" evidence="17">
    <location>
        <begin position="357"/>
        <end position="359"/>
    </location>
</feature>
<feature type="helix" evidence="16">
    <location>
        <begin position="363"/>
        <end position="367"/>
    </location>
</feature>
<feature type="strand" evidence="16">
    <location>
        <begin position="372"/>
        <end position="374"/>
    </location>
</feature>
<feature type="strand" evidence="16">
    <location>
        <begin position="377"/>
        <end position="379"/>
    </location>
</feature>
<feature type="helix" evidence="16">
    <location>
        <begin position="380"/>
        <end position="386"/>
    </location>
</feature>
<feature type="strand" evidence="16">
    <location>
        <begin position="391"/>
        <end position="397"/>
    </location>
</feature>
<feature type="strand" evidence="16">
    <location>
        <begin position="401"/>
        <end position="406"/>
    </location>
</feature>
<feature type="helix" evidence="16">
    <location>
        <begin position="408"/>
        <end position="418"/>
    </location>
</feature>
<feature type="strand" evidence="16">
    <location>
        <begin position="422"/>
        <end position="425"/>
    </location>
</feature>
<feature type="strand" evidence="16">
    <location>
        <begin position="433"/>
        <end position="437"/>
    </location>
</feature>
<feature type="helix" evidence="16">
    <location>
        <begin position="438"/>
        <end position="440"/>
    </location>
</feature>
<feature type="strand" evidence="16">
    <location>
        <begin position="442"/>
        <end position="445"/>
    </location>
</feature>
<feature type="helix" evidence="16">
    <location>
        <begin position="451"/>
        <end position="453"/>
    </location>
</feature>
<feature type="strand" evidence="16">
    <location>
        <begin position="459"/>
        <end position="465"/>
    </location>
</feature>
<feature type="strand" evidence="16">
    <location>
        <begin position="468"/>
        <end position="476"/>
    </location>
</feature>
<feature type="turn" evidence="16">
    <location>
        <begin position="486"/>
        <end position="489"/>
    </location>
</feature>
<feature type="helix" evidence="17">
    <location>
        <begin position="492"/>
        <end position="494"/>
    </location>
</feature>
<accession>P53042</accession>